<organism>
    <name type="scientific">Rhizobium leguminosarum bv. trifolii (strain WSM2304)</name>
    <dbReference type="NCBI Taxonomy" id="395492"/>
    <lineage>
        <taxon>Bacteria</taxon>
        <taxon>Pseudomonadati</taxon>
        <taxon>Pseudomonadota</taxon>
        <taxon>Alphaproteobacteria</taxon>
        <taxon>Hyphomicrobiales</taxon>
        <taxon>Rhizobiaceae</taxon>
        <taxon>Rhizobium/Agrobacterium group</taxon>
        <taxon>Rhizobium</taxon>
    </lineage>
</organism>
<dbReference type="EMBL" id="CP001191">
    <property type="protein sequence ID" value="ACI53544.1"/>
    <property type="molecule type" value="Genomic_DNA"/>
</dbReference>
<dbReference type="RefSeq" id="WP_003588672.1">
    <property type="nucleotide sequence ID" value="NC_011369.1"/>
</dbReference>
<dbReference type="SMR" id="B5ZPM7"/>
<dbReference type="STRING" id="395492.Rleg2_0244"/>
<dbReference type="KEGG" id="rlt:Rleg2_0244"/>
<dbReference type="eggNOG" id="COG3024">
    <property type="taxonomic scope" value="Bacteria"/>
</dbReference>
<dbReference type="HOGENOM" id="CLU_178280_2_2_5"/>
<dbReference type="Proteomes" id="UP000008330">
    <property type="component" value="Chromosome"/>
</dbReference>
<dbReference type="GO" id="GO:0008657">
    <property type="term" value="F:DNA topoisomerase type II (double strand cut, ATP-hydrolyzing) inhibitor activity"/>
    <property type="evidence" value="ECO:0007669"/>
    <property type="project" value="UniProtKB-UniRule"/>
</dbReference>
<dbReference type="GO" id="GO:0008270">
    <property type="term" value="F:zinc ion binding"/>
    <property type="evidence" value="ECO:0007669"/>
    <property type="project" value="UniProtKB-UniRule"/>
</dbReference>
<dbReference type="GO" id="GO:0006355">
    <property type="term" value="P:regulation of DNA-templated transcription"/>
    <property type="evidence" value="ECO:0007669"/>
    <property type="project" value="InterPro"/>
</dbReference>
<dbReference type="Gene3D" id="3.30.50.10">
    <property type="entry name" value="Erythroid Transcription Factor GATA-1, subunit A"/>
    <property type="match status" value="1"/>
</dbReference>
<dbReference type="HAMAP" id="MF_00649">
    <property type="entry name" value="DNA_gyrase_inhibitor_YacG"/>
    <property type="match status" value="1"/>
</dbReference>
<dbReference type="InterPro" id="IPR005584">
    <property type="entry name" value="DNA_gyrase_inhibitor_YacG"/>
</dbReference>
<dbReference type="InterPro" id="IPR013088">
    <property type="entry name" value="Znf_NHR/GATA"/>
</dbReference>
<dbReference type="NCBIfam" id="NF002362">
    <property type="entry name" value="PRK01343.1"/>
    <property type="match status" value="1"/>
</dbReference>
<dbReference type="PANTHER" id="PTHR36150">
    <property type="entry name" value="DNA GYRASE INHIBITOR YACG"/>
    <property type="match status" value="1"/>
</dbReference>
<dbReference type="PANTHER" id="PTHR36150:SF1">
    <property type="entry name" value="DNA GYRASE INHIBITOR YACG"/>
    <property type="match status" value="1"/>
</dbReference>
<dbReference type="Pfam" id="PF03884">
    <property type="entry name" value="YacG"/>
    <property type="match status" value="1"/>
</dbReference>
<dbReference type="SUPFAM" id="SSF57716">
    <property type="entry name" value="Glucocorticoid receptor-like (DNA-binding domain)"/>
    <property type="match status" value="1"/>
</dbReference>
<protein>
    <recommendedName>
        <fullName evidence="1">DNA gyrase inhibitor YacG</fullName>
    </recommendedName>
</protein>
<proteinExistence type="inferred from homology"/>
<keyword id="KW-0479">Metal-binding</keyword>
<keyword id="KW-1185">Reference proteome</keyword>
<keyword id="KW-0862">Zinc</keyword>
<sequence length="70" mass="7990">MPEDNKAAAKVEPLRKARPCPECGKPSHREHYPFCSNRCREVDLSRWLTGAYAIPVADDETKAEYPDEEN</sequence>
<gene>
    <name evidence="1" type="primary">yacG</name>
    <name type="ordered locus">Rleg2_0244</name>
</gene>
<name>YACG_RHILW</name>
<reference key="1">
    <citation type="journal article" date="2010" name="Stand. Genomic Sci.">
        <title>Complete genome sequence of Rhizobium leguminosarum bv trifolii strain WSM2304, an effective microsymbiont of the South American clover Trifolium polymorphum.</title>
        <authorList>
            <person name="Reeve W."/>
            <person name="O'Hara G."/>
            <person name="Chain P."/>
            <person name="Ardley J."/>
            <person name="Brau L."/>
            <person name="Nandesena K."/>
            <person name="Tiwari R."/>
            <person name="Malfatti S."/>
            <person name="Kiss H."/>
            <person name="Lapidus A."/>
            <person name="Copeland A."/>
            <person name="Nolan M."/>
            <person name="Land M."/>
            <person name="Ivanova N."/>
            <person name="Mavromatis K."/>
            <person name="Markowitz V."/>
            <person name="Kyrpides N."/>
            <person name="Melino V."/>
            <person name="Denton M."/>
            <person name="Yates R."/>
            <person name="Howieson J."/>
        </authorList>
    </citation>
    <scope>NUCLEOTIDE SEQUENCE [LARGE SCALE GENOMIC DNA]</scope>
    <source>
        <strain>WSM2304</strain>
    </source>
</reference>
<evidence type="ECO:0000255" key="1">
    <source>
        <dbReference type="HAMAP-Rule" id="MF_00649"/>
    </source>
</evidence>
<comment type="function">
    <text evidence="1">Inhibits all the catalytic activities of DNA gyrase by preventing its interaction with DNA. Acts by binding directly to the C-terminal domain of GyrB, which probably disrupts DNA binding by the gyrase.</text>
</comment>
<comment type="cofactor">
    <cofactor evidence="1">
        <name>Zn(2+)</name>
        <dbReference type="ChEBI" id="CHEBI:29105"/>
    </cofactor>
    <text evidence="1">Binds 1 zinc ion.</text>
</comment>
<comment type="subunit">
    <text evidence="1">Interacts with GyrB.</text>
</comment>
<comment type="similarity">
    <text evidence="1">Belongs to the DNA gyrase inhibitor YacG family.</text>
</comment>
<feature type="chain" id="PRO_1000200411" description="DNA gyrase inhibitor YacG">
    <location>
        <begin position="1"/>
        <end position="70"/>
    </location>
</feature>
<feature type="binding site" evidence="1">
    <location>
        <position position="20"/>
    </location>
    <ligand>
        <name>Zn(2+)</name>
        <dbReference type="ChEBI" id="CHEBI:29105"/>
    </ligand>
</feature>
<feature type="binding site" evidence="1">
    <location>
        <position position="23"/>
    </location>
    <ligand>
        <name>Zn(2+)</name>
        <dbReference type="ChEBI" id="CHEBI:29105"/>
    </ligand>
</feature>
<feature type="binding site" evidence="1">
    <location>
        <position position="35"/>
    </location>
    <ligand>
        <name>Zn(2+)</name>
        <dbReference type="ChEBI" id="CHEBI:29105"/>
    </ligand>
</feature>
<feature type="binding site" evidence="1">
    <location>
        <position position="39"/>
    </location>
    <ligand>
        <name>Zn(2+)</name>
        <dbReference type="ChEBI" id="CHEBI:29105"/>
    </ligand>
</feature>
<accession>B5ZPM7</accession>